<accession>Q6LMR1</accession>
<reference key="1">
    <citation type="journal article" date="2005" name="Science">
        <title>Life at depth: Photobacterium profundum genome sequence and expression analysis.</title>
        <authorList>
            <person name="Vezzi A."/>
            <person name="Campanaro S."/>
            <person name="D'Angelo M."/>
            <person name="Simonato F."/>
            <person name="Vitulo N."/>
            <person name="Lauro F.M."/>
            <person name="Cestaro A."/>
            <person name="Malacrida G."/>
            <person name="Simionati B."/>
            <person name="Cannata N."/>
            <person name="Romualdi C."/>
            <person name="Bartlett D.H."/>
            <person name="Valle G."/>
        </authorList>
    </citation>
    <scope>NUCLEOTIDE SEQUENCE [LARGE SCALE GENOMIC DNA]</scope>
    <source>
        <strain>ATCC BAA-1253 / SS9</strain>
    </source>
</reference>
<evidence type="ECO:0000255" key="1">
    <source>
        <dbReference type="HAMAP-Rule" id="MF_01175"/>
    </source>
</evidence>
<organism>
    <name type="scientific">Photobacterium profundum (strain SS9)</name>
    <dbReference type="NCBI Taxonomy" id="298386"/>
    <lineage>
        <taxon>Bacteria</taxon>
        <taxon>Pseudomonadati</taxon>
        <taxon>Pseudomonadota</taxon>
        <taxon>Gammaproteobacteria</taxon>
        <taxon>Vibrionales</taxon>
        <taxon>Vibrionaceae</taxon>
        <taxon>Photobacterium</taxon>
    </lineage>
</organism>
<name>YGFZ_PHOPR</name>
<keyword id="KW-0963">Cytoplasm</keyword>
<keyword id="KW-0290">Folate-binding</keyword>
<keyword id="KW-1185">Reference proteome</keyword>
<keyword id="KW-0819">tRNA processing</keyword>
<sequence>MSIEFNALNFKKVALAAQDKLPKLALINLDDWGLITLIGDDKKSYLQGQVTCDVVSLPINASIFGAHCDAKGKMRTIFRLFNHNEGYGFLQRKSVMEIQLPELKKYAVFSKVDIEASSDVLLGLSGEQAQAVVEQHFPGDGDVRVITAGTAIKVDDDRWLFAIAPEQAEQLINTLVETHNNVQLSDSTLWDLYDVLYAIPRIDAVTALEFIPQAVNLQAVDGISFKKGCYTGQETVARAKYRGINKRAMYIVTGEATQFPFTGDALERSVGDNWRKGGTLLASYLYADGQAIALVVLPNDLDEATQFRLADQPEAIWTQLDLPYSLDDK</sequence>
<feature type="chain" id="PRO_0000262893" description="tRNA-modifying protein YgfZ">
    <location>
        <begin position="1"/>
        <end position="329"/>
    </location>
</feature>
<feature type="binding site" evidence="1">
    <location>
        <position position="32"/>
    </location>
    <ligand>
        <name>folate</name>
        <dbReference type="ChEBI" id="CHEBI:62501"/>
    </ligand>
</feature>
<feature type="binding site" evidence="1">
    <location>
        <position position="190"/>
    </location>
    <ligand>
        <name>folate</name>
        <dbReference type="ChEBI" id="CHEBI:62501"/>
    </ligand>
</feature>
<proteinExistence type="inferred from homology"/>
<gene>
    <name type="ordered locus">PBPRA3100</name>
</gene>
<comment type="function">
    <text evidence="1">Folate-binding protein involved in regulating the level of ATP-DnaA and in the modification of some tRNAs. It is probably a key factor in regulatory networks that act via tRNA modification, such as initiation of chromosomal replication.</text>
</comment>
<comment type="subcellular location">
    <subcellularLocation>
        <location evidence="1">Cytoplasm</location>
    </subcellularLocation>
</comment>
<comment type="similarity">
    <text evidence="1">Belongs to the tRNA-modifying YgfZ family.</text>
</comment>
<protein>
    <recommendedName>
        <fullName evidence="1">tRNA-modifying protein YgfZ</fullName>
    </recommendedName>
</protein>
<dbReference type="EMBL" id="CR378673">
    <property type="protein sequence ID" value="CAG21416.1"/>
    <property type="molecule type" value="Genomic_DNA"/>
</dbReference>
<dbReference type="RefSeq" id="WP_011219674.1">
    <property type="nucleotide sequence ID" value="NC_006370.1"/>
</dbReference>
<dbReference type="SMR" id="Q6LMR1"/>
<dbReference type="STRING" id="298386.PBPRA3100"/>
<dbReference type="KEGG" id="ppr:PBPRA3100"/>
<dbReference type="eggNOG" id="COG0354">
    <property type="taxonomic scope" value="Bacteria"/>
</dbReference>
<dbReference type="HOGENOM" id="CLU_007884_6_1_6"/>
<dbReference type="Proteomes" id="UP000000593">
    <property type="component" value="Chromosome 1"/>
</dbReference>
<dbReference type="GO" id="GO:0005737">
    <property type="term" value="C:cytoplasm"/>
    <property type="evidence" value="ECO:0007669"/>
    <property type="project" value="UniProtKB-SubCell"/>
</dbReference>
<dbReference type="GO" id="GO:0005542">
    <property type="term" value="F:folic acid binding"/>
    <property type="evidence" value="ECO:0007669"/>
    <property type="project" value="UniProtKB-UniRule"/>
</dbReference>
<dbReference type="GO" id="GO:0016226">
    <property type="term" value="P:iron-sulfur cluster assembly"/>
    <property type="evidence" value="ECO:0007669"/>
    <property type="project" value="TreeGrafter"/>
</dbReference>
<dbReference type="GO" id="GO:0009451">
    <property type="term" value="P:RNA modification"/>
    <property type="evidence" value="ECO:0007669"/>
    <property type="project" value="InterPro"/>
</dbReference>
<dbReference type="GO" id="GO:0008033">
    <property type="term" value="P:tRNA processing"/>
    <property type="evidence" value="ECO:0007669"/>
    <property type="project" value="UniProtKB-UniRule"/>
</dbReference>
<dbReference type="FunFam" id="3.30.70.1400:FF:000002">
    <property type="entry name" value="tRNA-modifying protein YgfZ"/>
    <property type="match status" value="1"/>
</dbReference>
<dbReference type="Gene3D" id="2.40.30.160">
    <property type="match status" value="1"/>
</dbReference>
<dbReference type="Gene3D" id="3.30.70.1630">
    <property type="match status" value="1"/>
</dbReference>
<dbReference type="Gene3D" id="3.30.70.1400">
    <property type="entry name" value="Aminomethyltransferase beta-barrel domains"/>
    <property type="match status" value="1"/>
</dbReference>
<dbReference type="HAMAP" id="MF_01175">
    <property type="entry name" value="tRNA_modifying_YgfZ"/>
    <property type="match status" value="1"/>
</dbReference>
<dbReference type="InterPro" id="IPR029043">
    <property type="entry name" value="GcvT/YgfZ_C"/>
</dbReference>
<dbReference type="InterPro" id="IPR023758">
    <property type="entry name" value="tRNA-modifying_YgfZ"/>
</dbReference>
<dbReference type="InterPro" id="IPR045179">
    <property type="entry name" value="YgfZ/GcvT"/>
</dbReference>
<dbReference type="InterPro" id="IPR017703">
    <property type="entry name" value="YgfZ/GcvT_CS"/>
</dbReference>
<dbReference type="InterPro" id="IPR048451">
    <property type="entry name" value="YgfZ_barrel"/>
</dbReference>
<dbReference type="NCBIfam" id="NF007110">
    <property type="entry name" value="PRK09559.1"/>
    <property type="match status" value="1"/>
</dbReference>
<dbReference type="NCBIfam" id="TIGR03317">
    <property type="entry name" value="ygfZ_signature"/>
    <property type="match status" value="1"/>
</dbReference>
<dbReference type="PANTHER" id="PTHR22602">
    <property type="entry name" value="TRANSFERASE CAF17, MITOCHONDRIAL-RELATED"/>
    <property type="match status" value="1"/>
</dbReference>
<dbReference type="PANTHER" id="PTHR22602:SF0">
    <property type="entry name" value="TRANSFERASE CAF17, MITOCHONDRIAL-RELATED"/>
    <property type="match status" value="1"/>
</dbReference>
<dbReference type="Pfam" id="PF21130">
    <property type="entry name" value="YgfZ_barrel"/>
    <property type="match status" value="1"/>
</dbReference>
<dbReference type="SUPFAM" id="SSF101790">
    <property type="entry name" value="Aminomethyltransferase beta-barrel domain"/>
    <property type="match status" value="1"/>
</dbReference>
<dbReference type="SUPFAM" id="SSF103025">
    <property type="entry name" value="Folate-binding domain"/>
    <property type="match status" value="1"/>
</dbReference>